<evidence type="ECO:0000255" key="1">
    <source>
        <dbReference type="PROSITE-ProRule" id="PRU00267"/>
    </source>
</evidence>
<protein>
    <recommendedName>
        <fullName>SRY-related protein AES2</fullName>
    </recommendedName>
</protein>
<dbReference type="EMBL" id="M86314">
    <property type="protein sequence ID" value="AAA48527.1"/>
    <property type="molecule type" value="Genomic_DNA"/>
</dbReference>
<dbReference type="PIR" id="I50023">
    <property type="entry name" value="I50023"/>
</dbReference>
<dbReference type="SMR" id="P40638"/>
<dbReference type="GO" id="GO:0005634">
    <property type="term" value="C:nucleus"/>
    <property type="evidence" value="ECO:0007669"/>
    <property type="project" value="UniProtKB-SubCell"/>
</dbReference>
<dbReference type="GO" id="GO:0001228">
    <property type="term" value="F:DNA-binding transcription activator activity, RNA polymerase II-specific"/>
    <property type="evidence" value="ECO:0007669"/>
    <property type="project" value="TreeGrafter"/>
</dbReference>
<dbReference type="GO" id="GO:0000978">
    <property type="term" value="F:RNA polymerase II cis-regulatory region sequence-specific DNA binding"/>
    <property type="evidence" value="ECO:0007669"/>
    <property type="project" value="TreeGrafter"/>
</dbReference>
<dbReference type="GO" id="GO:0007420">
    <property type="term" value="P:brain development"/>
    <property type="evidence" value="ECO:0007669"/>
    <property type="project" value="TreeGrafter"/>
</dbReference>
<dbReference type="GO" id="GO:0048593">
    <property type="term" value="P:camera-type eye morphogenesis"/>
    <property type="evidence" value="ECO:0007669"/>
    <property type="project" value="TreeGrafter"/>
</dbReference>
<dbReference type="GO" id="GO:0000122">
    <property type="term" value="P:negative regulation of transcription by RNA polymerase II"/>
    <property type="evidence" value="ECO:0007669"/>
    <property type="project" value="TreeGrafter"/>
</dbReference>
<dbReference type="GO" id="GO:0030182">
    <property type="term" value="P:neuron differentiation"/>
    <property type="evidence" value="ECO:0007669"/>
    <property type="project" value="TreeGrafter"/>
</dbReference>
<dbReference type="FunFam" id="1.10.30.10:FF:000007">
    <property type="entry name" value="Transcription factor SOX"/>
    <property type="match status" value="1"/>
</dbReference>
<dbReference type="Gene3D" id="1.10.30.10">
    <property type="entry name" value="High mobility group box domain"/>
    <property type="match status" value="1"/>
</dbReference>
<dbReference type="InterPro" id="IPR009071">
    <property type="entry name" value="HMG_box_dom"/>
</dbReference>
<dbReference type="InterPro" id="IPR036910">
    <property type="entry name" value="HMG_box_dom_sf"/>
</dbReference>
<dbReference type="InterPro" id="IPR050140">
    <property type="entry name" value="SRY-related_HMG-box_TF-like"/>
</dbReference>
<dbReference type="PANTHER" id="PTHR10270">
    <property type="entry name" value="SOX TRANSCRIPTION FACTOR"/>
    <property type="match status" value="1"/>
</dbReference>
<dbReference type="PANTHER" id="PTHR10270:SF27">
    <property type="entry name" value="TRANSCRIPTION FACTOR SOX-4"/>
    <property type="match status" value="1"/>
</dbReference>
<dbReference type="Pfam" id="PF00505">
    <property type="entry name" value="HMG_box"/>
    <property type="match status" value="1"/>
</dbReference>
<dbReference type="PRINTS" id="PR00886">
    <property type="entry name" value="HIGHMOBLTY12"/>
</dbReference>
<dbReference type="SMART" id="SM00398">
    <property type="entry name" value="HMG"/>
    <property type="match status" value="1"/>
</dbReference>
<dbReference type="SUPFAM" id="SSF47095">
    <property type="entry name" value="HMG-box"/>
    <property type="match status" value="1"/>
</dbReference>
<dbReference type="PROSITE" id="PS50118">
    <property type="entry name" value="HMG_BOX_2"/>
    <property type="match status" value="1"/>
</dbReference>
<keyword id="KW-0238">DNA-binding</keyword>
<keyword id="KW-0539">Nucleus</keyword>
<name>AES2_ALLMI</name>
<comment type="subcellular location">
    <subcellularLocation>
        <location evidence="1">Nucleus</location>
    </subcellularLocation>
</comment>
<organism>
    <name type="scientific">Alligator mississippiensis</name>
    <name type="common">American alligator</name>
    <dbReference type="NCBI Taxonomy" id="8496"/>
    <lineage>
        <taxon>Eukaryota</taxon>
        <taxon>Metazoa</taxon>
        <taxon>Chordata</taxon>
        <taxon>Craniata</taxon>
        <taxon>Vertebrata</taxon>
        <taxon>Euteleostomi</taxon>
        <taxon>Archelosauria</taxon>
        <taxon>Archosauria</taxon>
        <taxon>Crocodylia</taxon>
        <taxon>Alligatoridae</taxon>
        <taxon>Alligatorinae</taxon>
        <taxon>Alligator</taxon>
    </lineage>
</organism>
<sequence>VKRPMNAFMVGSQIERRKIMEQSPDMHNAEISKRLGKRWKLLKGSDKIPFIREAERLRIKHMADYPDYKYRP</sequence>
<proteinExistence type="inferred from homology"/>
<reference key="1">
    <citation type="journal article" date="1993" name="PCR Methods Appl.">
        <title>PCR amplification of SRY-related gene sequences reveals evolutionary conservation of the SRY-box motif.</title>
        <authorList>
            <person name="Coriat A.M."/>
            <person name="Mueller U."/>
            <person name="Harry J.L."/>
            <person name="Uwanogho D."/>
            <person name="Sharpe P.T."/>
        </authorList>
    </citation>
    <scope>NUCLEOTIDE SEQUENCE [GENOMIC DNA]</scope>
</reference>
<accession>P40638</accession>
<feature type="chain" id="PRO_0000048791" description="SRY-related protein AES2">
    <location>
        <begin position="1" status="less than"/>
        <end position="72" status="greater than"/>
    </location>
</feature>
<feature type="DNA-binding region" description="HMG box" evidence="1">
    <location>
        <begin position="1"/>
        <end position="69"/>
    </location>
</feature>
<feature type="non-terminal residue">
    <location>
        <position position="1"/>
    </location>
</feature>
<feature type="non-terminal residue">
    <location>
        <position position="72"/>
    </location>
</feature>